<keyword id="KW-0095">Blood group antigen</keyword>
<keyword id="KW-1003">Cell membrane</keyword>
<keyword id="KW-0903">Direct protein sequencing</keyword>
<keyword id="KW-1015">Disulfide bond</keyword>
<keyword id="KW-0325">Glycoprotein</keyword>
<keyword id="KW-0378">Hydrolase</keyword>
<keyword id="KW-0472">Membrane</keyword>
<keyword id="KW-0479">Metal-binding</keyword>
<keyword id="KW-0482">Metalloprotease</keyword>
<keyword id="KW-0597">Phosphoprotein</keyword>
<keyword id="KW-0645">Protease</keyword>
<keyword id="KW-1267">Proteomics identification</keyword>
<keyword id="KW-1185">Reference proteome</keyword>
<keyword id="KW-0735">Signal-anchor</keyword>
<keyword id="KW-0812">Transmembrane</keyword>
<keyword id="KW-1133">Transmembrane helix</keyword>
<keyword id="KW-0862">Zinc</keyword>
<proteinExistence type="evidence at protein level"/>
<dbReference type="EC" id="3.4.24.-"/>
<dbReference type="EMBL" id="M64934">
    <property type="protein sequence ID" value="AAA03192.1"/>
    <property type="molecule type" value="mRNA"/>
</dbReference>
<dbReference type="EMBL" id="AF172627">
    <property type="protein sequence ID" value="AAB33459.1"/>
    <property type="molecule type" value="Genomic_DNA"/>
</dbReference>
<dbReference type="EMBL" id="AF172609">
    <property type="protein sequence ID" value="AAB33459.1"/>
    <property type="status" value="JOINED"/>
    <property type="molecule type" value="Genomic_DNA"/>
</dbReference>
<dbReference type="EMBL" id="AF172610">
    <property type="protein sequence ID" value="AAB33459.1"/>
    <property type="status" value="JOINED"/>
    <property type="molecule type" value="Genomic_DNA"/>
</dbReference>
<dbReference type="EMBL" id="AF172611">
    <property type="protein sequence ID" value="AAB33459.1"/>
    <property type="status" value="JOINED"/>
    <property type="molecule type" value="Genomic_DNA"/>
</dbReference>
<dbReference type="EMBL" id="AF172612">
    <property type="protein sequence ID" value="AAB33459.1"/>
    <property type="status" value="JOINED"/>
    <property type="molecule type" value="Genomic_DNA"/>
</dbReference>
<dbReference type="EMBL" id="AF172613">
    <property type="protein sequence ID" value="AAB33459.1"/>
    <property type="status" value="JOINED"/>
    <property type="molecule type" value="Genomic_DNA"/>
</dbReference>
<dbReference type="EMBL" id="AF172614">
    <property type="protein sequence ID" value="AAB33459.1"/>
    <property type="status" value="JOINED"/>
    <property type="molecule type" value="Genomic_DNA"/>
</dbReference>
<dbReference type="EMBL" id="AF172615">
    <property type="protein sequence ID" value="AAB33459.1"/>
    <property type="status" value="JOINED"/>
    <property type="molecule type" value="Genomic_DNA"/>
</dbReference>
<dbReference type="EMBL" id="AF172616">
    <property type="protein sequence ID" value="AAB33459.1"/>
    <property type="status" value="JOINED"/>
    <property type="molecule type" value="Genomic_DNA"/>
</dbReference>
<dbReference type="EMBL" id="AF172617">
    <property type="protein sequence ID" value="AAB33459.1"/>
    <property type="status" value="JOINED"/>
    <property type="molecule type" value="Genomic_DNA"/>
</dbReference>
<dbReference type="EMBL" id="AF172618">
    <property type="protein sequence ID" value="AAB33459.1"/>
    <property type="status" value="JOINED"/>
    <property type="molecule type" value="Genomic_DNA"/>
</dbReference>
<dbReference type="EMBL" id="AF172619">
    <property type="protein sequence ID" value="AAB33459.1"/>
    <property type="status" value="JOINED"/>
    <property type="molecule type" value="Genomic_DNA"/>
</dbReference>
<dbReference type="EMBL" id="AF172620">
    <property type="protein sequence ID" value="AAB33459.1"/>
    <property type="status" value="JOINED"/>
    <property type="molecule type" value="Genomic_DNA"/>
</dbReference>
<dbReference type="EMBL" id="AF172621">
    <property type="protein sequence ID" value="AAB33459.1"/>
    <property type="status" value="JOINED"/>
    <property type="molecule type" value="Genomic_DNA"/>
</dbReference>
<dbReference type="EMBL" id="AF172622">
    <property type="protein sequence ID" value="AAB33459.1"/>
    <property type="status" value="JOINED"/>
    <property type="molecule type" value="Genomic_DNA"/>
</dbReference>
<dbReference type="EMBL" id="AF172623">
    <property type="protein sequence ID" value="AAB33459.1"/>
    <property type="status" value="JOINED"/>
    <property type="molecule type" value="Genomic_DNA"/>
</dbReference>
<dbReference type="EMBL" id="AF172624">
    <property type="protein sequence ID" value="AAB33459.1"/>
    <property type="status" value="JOINED"/>
    <property type="molecule type" value="Genomic_DNA"/>
</dbReference>
<dbReference type="EMBL" id="AF172625">
    <property type="protein sequence ID" value="AAB33459.1"/>
    <property type="status" value="JOINED"/>
    <property type="molecule type" value="Genomic_DNA"/>
</dbReference>
<dbReference type="EMBL" id="AF172626">
    <property type="protein sequence ID" value="AAB33459.1"/>
    <property type="status" value="JOINED"/>
    <property type="molecule type" value="Genomic_DNA"/>
</dbReference>
<dbReference type="EMBL" id="AY228336">
    <property type="protein sequence ID" value="AAO38053.1"/>
    <property type="molecule type" value="Genomic_DNA"/>
</dbReference>
<dbReference type="EMBL" id="AK314831">
    <property type="protein sequence ID" value="BAG37351.1"/>
    <property type="molecule type" value="mRNA"/>
</dbReference>
<dbReference type="EMBL" id="CH471198">
    <property type="protein sequence ID" value="EAW51891.1"/>
    <property type="molecule type" value="Genomic_DNA"/>
</dbReference>
<dbReference type="EMBL" id="BC003135">
    <property type="protein sequence ID" value="AAH03135.1"/>
    <property type="molecule type" value="mRNA"/>
</dbReference>
<dbReference type="EMBL" id="BC050639">
    <property type="protein sequence ID" value="AAH50639.1"/>
    <property type="molecule type" value="mRNA"/>
</dbReference>
<dbReference type="EMBL" id="AF279657">
    <property type="protein sequence ID" value="AAK69488.1"/>
    <property type="molecule type" value="Genomic_DNA"/>
</dbReference>
<dbReference type="EMBL" id="S80081">
    <property type="protein sequence ID" value="AAB47018.1"/>
    <property type="molecule type" value="Genomic_DNA"/>
</dbReference>
<dbReference type="CCDS" id="CCDS34766.1"/>
<dbReference type="RefSeq" id="NP_000411.1">
    <property type="nucleotide sequence ID" value="NM_000420.3"/>
</dbReference>
<dbReference type="RefSeq" id="XP_054184681.1">
    <property type="nucleotide sequence ID" value="XM_054328706.1"/>
</dbReference>
<dbReference type="RefSeq" id="XP_054214159.1">
    <property type="nucleotide sequence ID" value="XM_054358184.1"/>
</dbReference>
<dbReference type="SMR" id="P23276"/>
<dbReference type="BioGRID" id="109993">
    <property type="interactions" value="41"/>
</dbReference>
<dbReference type="FunCoup" id="P23276">
    <property type="interactions" value="79"/>
</dbReference>
<dbReference type="IntAct" id="P23276">
    <property type="interactions" value="15"/>
</dbReference>
<dbReference type="MINT" id="P23276"/>
<dbReference type="STRING" id="9606.ENSP00000347409"/>
<dbReference type="DrugBank" id="DB02557">
    <property type="generic name" value="Phosphoramidon"/>
</dbReference>
<dbReference type="MEROPS" id="M13.090"/>
<dbReference type="GlyCosmos" id="P23276">
    <property type="glycosylation" value="5 sites, No reported glycans"/>
</dbReference>
<dbReference type="GlyGen" id="P23276">
    <property type="glycosylation" value="6 sites, 2 N-linked glycans (1 site)"/>
</dbReference>
<dbReference type="iPTMnet" id="P23276"/>
<dbReference type="PhosphoSitePlus" id="P23276"/>
<dbReference type="BioMuta" id="KEL"/>
<dbReference type="DMDM" id="1346376"/>
<dbReference type="MassIVE" id="P23276"/>
<dbReference type="PaxDb" id="9606-ENSP00000347409"/>
<dbReference type="PeptideAtlas" id="P23276"/>
<dbReference type="ProteomicsDB" id="54076"/>
<dbReference type="Pumba" id="P23276"/>
<dbReference type="ABCD" id="P23276">
    <property type="antibodies" value="3 sequenced antibodies"/>
</dbReference>
<dbReference type="Antibodypedia" id="18443">
    <property type="antibodies" value="360 antibodies from 28 providers"/>
</dbReference>
<dbReference type="DNASU" id="3792"/>
<dbReference type="Ensembl" id="ENST00000355265.7">
    <property type="protein sequence ID" value="ENSP00000347409.2"/>
    <property type="gene ID" value="ENSG00000197993.9"/>
</dbReference>
<dbReference type="Ensembl" id="ENST00000615381.2">
    <property type="protein sequence ID" value="ENSP00000477793.1"/>
    <property type="gene ID" value="ENSG00000276615.2"/>
</dbReference>
<dbReference type="GeneID" id="3792"/>
<dbReference type="KEGG" id="hsa:3792"/>
<dbReference type="MANE-Select" id="ENST00000355265.7">
    <property type="protein sequence ID" value="ENSP00000347409.2"/>
    <property type="RefSeq nucleotide sequence ID" value="NM_000420.3"/>
    <property type="RefSeq protein sequence ID" value="NP_000411.1"/>
</dbReference>
<dbReference type="UCSC" id="uc003wcb.4">
    <property type="organism name" value="human"/>
</dbReference>
<dbReference type="AGR" id="HGNC:6308"/>
<dbReference type="CTD" id="3792"/>
<dbReference type="DisGeNET" id="3792"/>
<dbReference type="GeneCards" id="KEL"/>
<dbReference type="HGNC" id="HGNC:6308">
    <property type="gene designation" value="KEL"/>
</dbReference>
<dbReference type="HPA" id="ENSG00000197993">
    <property type="expression patterns" value="Group enriched (bone marrow, testis)"/>
</dbReference>
<dbReference type="MalaCards" id="KEL"/>
<dbReference type="MIM" id="110900">
    <property type="type" value="phenotype"/>
</dbReference>
<dbReference type="MIM" id="613883">
    <property type="type" value="gene"/>
</dbReference>
<dbReference type="neXtProt" id="NX_P23276"/>
<dbReference type="OpenTargets" id="ENSG00000197993"/>
<dbReference type="PharmGKB" id="PA30087"/>
<dbReference type="VEuPathDB" id="HostDB:ENSG00000197993"/>
<dbReference type="eggNOG" id="KOG3624">
    <property type="taxonomic scope" value="Eukaryota"/>
</dbReference>
<dbReference type="GeneTree" id="ENSGT00940000161830"/>
<dbReference type="HOGENOM" id="CLU_006187_8_2_1"/>
<dbReference type="InParanoid" id="P23276"/>
<dbReference type="OMA" id="CLEHHYA"/>
<dbReference type="OrthoDB" id="6475849at2759"/>
<dbReference type="PAN-GO" id="P23276">
    <property type="GO annotations" value="3 GO annotations based on evolutionary models"/>
</dbReference>
<dbReference type="PhylomeDB" id="P23276"/>
<dbReference type="TreeFam" id="TF315192"/>
<dbReference type="PathwayCommons" id="P23276"/>
<dbReference type="Reactome" id="R-HSA-375276">
    <property type="pathway name" value="Peptide ligand-binding receptors"/>
</dbReference>
<dbReference type="SignaLink" id="P23276"/>
<dbReference type="SIGNOR" id="P23276"/>
<dbReference type="BioGRID-ORCS" id="3792">
    <property type="hits" value="13 hits in 1150 CRISPR screens"/>
</dbReference>
<dbReference type="GenomeRNAi" id="3792"/>
<dbReference type="Pharos" id="P23276">
    <property type="development level" value="Tbio"/>
</dbReference>
<dbReference type="PRO" id="PR:P23276"/>
<dbReference type="Proteomes" id="UP000005640">
    <property type="component" value="Chromosome 7"/>
</dbReference>
<dbReference type="RNAct" id="P23276">
    <property type="molecule type" value="protein"/>
</dbReference>
<dbReference type="Bgee" id="ENSG00000197993">
    <property type="expression patterns" value="Expressed in right testis and 96 other cell types or tissues"/>
</dbReference>
<dbReference type="ExpressionAtlas" id="P23276">
    <property type="expression patterns" value="baseline and differential"/>
</dbReference>
<dbReference type="GO" id="GO:0005829">
    <property type="term" value="C:cytosol"/>
    <property type="evidence" value="ECO:0000314"/>
    <property type="project" value="HPA"/>
</dbReference>
<dbReference type="GO" id="GO:0005794">
    <property type="term" value="C:Golgi apparatus"/>
    <property type="evidence" value="ECO:0000314"/>
    <property type="project" value="HPA"/>
</dbReference>
<dbReference type="GO" id="GO:0016020">
    <property type="term" value="C:membrane"/>
    <property type="evidence" value="ECO:0000304"/>
    <property type="project" value="HGNC-UCL"/>
</dbReference>
<dbReference type="GO" id="GO:0005654">
    <property type="term" value="C:nucleoplasm"/>
    <property type="evidence" value="ECO:0000314"/>
    <property type="project" value="HPA"/>
</dbReference>
<dbReference type="GO" id="GO:0005886">
    <property type="term" value="C:plasma membrane"/>
    <property type="evidence" value="ECO:0000314"/>
    <property type="project" value="HPA"/>
</dbReference>
<dbReference type="GO" id="GO:0046872">
    <property type="term" value="F:metal ion binding"/>
    <property type="evidence" value="ECO:0007669"/>
    <property type="project" value="UniProtKB-KW"/>
</dbReference>
<dbReference type="GO" id="GO:0004222">
    <property type="term" value="F:metalloendopeptidase activity"/>
    <property type="evidence" value="ECO:0000314"/>
    <property type="project" value="HGNC-UCL"/>
</dbReference>
<dbReference type="GO" id="GO:0051649">
    <property type="term" value="P:establishment of localization in cell"/>
    <property type="evidence" value="ECO:0007669"/>
    <property type="project" value="Ensembl"/>
</dbReference>
<dbReference type="GO" id="GO:0006874">
    <property type="term" value="P:intracellular calcium ion homeostasis"/>
    <property type="evidence" value="ECO:0007669"/>
    <property type="project" value="Ensembl"/>
</dbReference>
<dbReference type="GO" id="GO:0010961">
    <property type="term" value="P:intracellular magnesium ion homeostasis"/>
    <property type="evidence" value="ECO:0007669"/>
    <property type="project" value="Ensembl"/>
</dbReference>
<dbReference type="GO" id="GO:0042552">
    <property type="term" value="P:myelination"/>
    <property type="evidence" value="ECO:0007669"/>
    <property type="project" value="Ensembl"/>
</dbReference>
<dbReference type="GO" id="GO:1901380">
    <property type="term" value="P:negative regulation of potassium ion transmembrane transport"/>
    <property type="evidence" value="ECO:0007669"/>
    <property type="project" value="Ensembl"/>
</dbReference>
<dbReference type="GO" id="GO:0071805">
    <property type="term" value="P:potassium ion transmembrane transport"/>
    <property type="evidence" value="ECO:0007669"/>
    <property type="project" value="Ensembl"/>
</dbReference>
<dbReference type="GO" id="GO:0016485">
    <property type="term" value="P:protein processing"/>
    <property type="evidence" value="ECO:0000318"/>
    <property type="project" value="GO_Central"/>
</dbReference>
<dbReference type="GO" id="GO:0031133">
    <property type="term" value="P:regulation of axon diameter"/>
    <property type="evidence" value="ECO:0007669"/>
    <property type="project" value="Ensembl"/>
</dbReference>
<dbReference type="GO" id="GO:0008361">
    <property type="term" value="P:regulation of cell size"/>
    <property type="evidence" value="ECO:0007669"/>
    <property type="project" value="Ensembl"/>
</dbReference>
<dbReference type="GO" id="GO:0048741">
    <property type="term" value="P:skeletal muscle fiber development"/>
    <property type="evidence" value="ECO:0007669"/>
    <property type="project" value="Ensembl"/>
</dbReference>
<dbReference type="GO" id="GO:0042310">
    <property type="term" value="P:vasoconstriction"/>
    <property type="evidence" value="ECO:0000304"/>
    <property type="project" value="HGNC-UCL"/>
</dbReference>
<dbReference type="CDD" id="cd08662">
    <property type="entry name" value="M13"/>
    <property type="match status" value="1"/>
</dbReference>
<dbReference type="Gene3D" id="3.40.390.10">
    <property type="entry name" value="Collagenase (Catalytic Domain)"/>
    <property type="match status" value="1"/>
</dbReference>
<dbReference type="Gene3D" id="1.10.1380.10">
    <property type="entry name" value="Neutral endopeptidase , domain2"/>
    <property type="match status" value="1"/>
</dbReference>
<dbReference type="InterPro" id="IPR024079">
    <property type="entry name" value="MetalloPept_cat_dom_sf"/>
</dbReference>
<dbReference type="InterPro" id="IPR000718">
    <property type="entry name" value="Peptidase_M13"/>
</dbReference>
<dbReference type="InterPro" id="IPR018497">
    <property type="entry name" value="Peptidase_M13_C"/>
</dbReference>
<dbReference type="InterPro" id="IPR042089">
    <property type="entry name" value="Peptidase_M13_dom_2"/>
</dbReference>
<dbReference type="InterPro" id="IPR008753">
    <property type="entry name" value="Peptidase_M13_N"/>
</dbReference>
<dbReference type="PANTHER" id="PTHR11733:SF128">
    <property type="entry name" value="KELL BLOOD GROUP GLYCOPROTEIN"/>
    <property type="match status" value="1"/>
</dbReference>
<dbReference type="PANTHER" id="PTHR11733">
    <property type="entry name" value="ZINC METALLOPROTEASE FAMILY M13 NEPRILYSIN-RELATED"/>
    <property type="match status" value="1"/>
</dbReference>
<dbReference type="Pfam" id="PF01431">
    <property type="entry name" value="Peptidase_M13"/>
    <property type="match status" value="1"/>
</dbReference>
<dbReference type="Pfam" id="PF05649">
    <property type="entry name" value="Peptidase_M13_N"/>
    <property type="match status" value="1"/>
</dbReference>
<dbReference type="PRINTS" id="PR00786">
    <property type="entry name" value="NEPRILYSIN"/>
</dbReference>
<dbReference type="SUPFAM" id="SSF55486">
    <property type="entry name" value="Metalloproteases ('zincins'), catalytic domain"/>
    <property type="match status" value="1"/>
</dbReference>
<dbReference type="PROSITE" id="PS51885">
    <property type="entry name" value="NEPRILYSIN"/>
    <property type="match status" value="1"/>
</dbReference>
<dbReference type="PROSITE" id="PS00142">
    <property type="entry name" value="ZINC_PROTEASE"/>
    <property type="match status" value="1"/>
</dbReference>
<sequence>MEGGDQSEEEPRERSQAGGMGTLWSQESTPEERLPVEGSRPWAVARRVLTAILILGLLLCFSVLLFYNFQNCGPRPCETSVCLDLRDHYLASGNTSVAPCTDFFSFACGRAKETNNSFQELATKNKNRLRRILEVQNSWHPGSGEEKAFQFYNSCMDTLAIEAAGTGPLRQVIEELGGWRISGKWTSLNFNRTLRLLMSQYGHFPFFRAYLGPHPASPHTPVIQIDQPEFDVPLKQDQEQKIYAQIFREYLTYLNQLGTLLGGDPSKVQEHSSLSISITSRLFQFLRPLEQRRAQGKLFQMVTIDQLKEMAPAIDWLSCLQATFTPMSLSPSQSLVVHDVEYLKNMSQLVEEMLLKQRDFLQSHMILGLVVTLSPALDSQFQEARRKLSQKLRELTEQPPMPARPRWMKCVEETGTFFEPTLAALFVREAFGPSTRSAAMKLFTAIRDALITRLRNLPWMNEETQNMAQDKVAQLQVEMGASEWALKPELARQEYNDIQLGSSFLQSVLSCVRSLRARIVQSFLQPHPQHRWKVSPWDVNAYYSVSDHVVVFPAGLLQPPFFHPGYPRAVNFGAAGSIMAHELLHIFYQLLLPGGCLACDNHALQEAHLCLKRHYAAFPLPSRTSFNDSLTFLENAADVGGLAIALQAYSKRLLRHHGETVLPSLDLSPQQIFFRSYAQVMCRKPSPQDSHDTHSPPHLRVHGPLSSTPAFARYFRCARGALLNPSSRCQLW</sequence>
<gene>
    <name type="primary">KEL</name>
</gene>
<protein>
    <recommendedName>
        <fullName>Kell blood group glycoprotein</fullName>
        <ecNumber>3.4.24.-</ecNumber>
    </recommendedName>
    <cdAntigenName>CD238</cdAntigenName>
</protein>
<feature type="chain" id="PRO_0000078227" description="Kell blood group glycoprotein">
    <location>
        <begin position="1"/>
        <end position="732"/>
    </location>
</feature>
<feature type="topological domain" description="Cytoplasmic" evidence="2">
    <location>
        <begin position="1"/>
        <end position="47"/>
    </location>
</feature>
<feature type="transmembrane region" description="Helical; Signal-anchor for type II membrane protein" evidence="2">
    <location>
        <begin position="48"/>
        <end position="67"/>
    </location>
</feature>
<feature type="topological domain" description="Extracellular" evidence="2">
    <location>
        <begin position="68"/>
        <end position="732"/>
    </location>
</feature>
<feature type="domain" description="Peptidase M13" evidence="3">
    <location>
        <begin position="76"/>
        <end position="732"/>
    </location>
</feature>
<feature type="region of interest" description="Disordered" evidence="5">
    <location>
        <begin position="1"/>
        <end position="37"/>
    </location>
</feature>
<feature type="region of interest" description="Disordered" evidence="5">
    <location>
        <begin position="684"/>
        <end position="703"/>
    </location>
</feature>
<feature type="active site" evidence="3">
    <location>
        <position position="582"/>
    </location>
</feature>
<feature type="active site" description="Proton donor" evidence="3">
    <location>
        <position position="638"/>
    </location>
</feature>
<feature type="binding site" evidence="3 4">
    <location>
        <position position="581"/>
    </location>
    <ligand>
        <name>Zn(2+)</name>
        <dbReference type="ChEBI" id="CHEBI:29105"/>
        <note>catalytic</note>
    </ligand>
</feature>
<feature type="binding site" evidence="3 4">
    <location>
        <position position="585"/>
    </location>
    <ligand>
        <name>Zn(2+)</name>
        <dbReference type="ChEBI" id="CHEBI:29105"/>
        <note>catalytic</note>
    </ligand>
</feature>
<feature type="binding site" evidence="3">
    <location>
        <position position="634"/>
    </location>
    <ligand>
        <name>Zn(2+)</name>
        <dbReference type="ChEBI" id="CHEBI:29105"/>
        <note>catalytic</note>
    </ligand>
</feature>
<feature type="modified residue" description="Phosphoserine" evidence="16">
    <location>
        <position position="7"/>
    </location>
</feature>
<feature type="glycosylation site" description="N-linked (GlcNAc...) asparagine" evidence="2">
    <location>
        <position position="94"/>
    </location>
</feature>
<feature type="glycosylation site" description="N-linked (GlcNAc...) asparagine" evidence="2">
    <location>
        <position position="115"/>
    </location>
</feature>
<feature type="glycosylation site" description="N-linked (GlcNAc...) asparagine; in KEL2 antigen" evidence="8">
    <location>
        <position position="191"/>
    </location>
</feature>
<feature type="glycosylation site" description="N-linked (GlcNAc...) asparagine" evidence="2">
    <location>
        <position position="345"/>
    </location>
</feature>
<feature type="glycosylation site" description="N-linked (GlcNAc...) asparagine" evidence="2">
    <location>
        <position position="627"/>
    </location>
</feature>
<feature type="disulfide bond" description="Interchain (with C-347 in XK)" evidence="13">
    <location>
        <position position="72"/>
    </location>
</feature>
<feature type="disulfide bond" evidence="3">
    <location>
        <begin position="77"/>
        <end position="82"/>
    </location>
</feature>
<feature type="disulfide bond" evidence="3">
    <location>
        <begin position="100"/>
        <end position="717"/>
    </location>
</feature>
<feature type="disulfide bond" evidence="3">
    <location>
        <begin position="108"/>
        <end position="682"/>
    </location>
</feature>
<feature type="disulfide bond" evidence="3">
    <location>
        <begin position="155"/>
        <end position="410"/>
    </location>
</feature>
<feature type="disulfide bond" evidence="3">
    <location>
        <begin position="610"/>
        <end position="729"/>
    </location>
</feature>
<feature type="sequence variant" id="VAR_016265" description="In dbSNP:rs8175974." evidence="14">
    <original>A</original>
    <variation>T</variation>
    <location>
        <position position="163"/>
    </location>
</feature>
<feature type="sequence variant" id="VAR_006731" description="In KEL24 antigen; dbSNP:rs61729039." evidence="12">
    <original>R</original>
    <variation>P</variation>
    <location>
        <position position="180"/>
    </location>
</feature>
<feature type="sequence variant" id="VAR_006732" description="In KEL1/K antigen; dbSNP:rs8176058." evidence="10 14">
    <original>T</original>
    <variation>M</variation>
    <location>
        <position position="193"/>
    </location>
</feature>
<feature type="sequence variant" id="VAR_015120" description="In KEL25 antigen; dbSNP:rs61729040.">
    <original>R</original>
    <variation>Q</variation>
    <location>
        <position position="248"/>
    </location>
</feature>
<feature type="sequence variant" id="VAR_015121" description="In KEL27 antigen; dbSNP:rs61729042.">
    <original>E</original>
    <variation>K</variation>
    <location>
        <position position="249"/>
    </location>
</feature>
<feature type="sequence variant" id="VAR_006734" description="In KEL21/Kp(c) antigen; dbSNP:rs61729036." evidence="11">
    <original>R</original>
    <variation>Q</variation>
    <location>
        <position position="281"/>
    </location>
</feature>
<feature type="sequence variant" id="VAR_006733" description="In KEL3/Kp(a) antigen; dbSNP:rs8176059." evidence="11 14">
    <original>R</original>
    <variation>W</variation>
    <location>
        <position position="281"/>
    </location>
</feature>
<feature type="sequence variant" id="VAR_006735" description="In KEL17 antigen; dbSNP:rs61729034." evidence="11">
    <original>V</original>
    <variation>A</variation>
    <location>
        <position position="302"/>
    </location>
</feature>
<feature type="sequence variant" id="VAR_015122" description="In KEL22 antigen; dbSNP:rs61729037.">
    <original>A</original>
    <variation>V</variation>
    <location>
        <position position="322"/>
    </location>
</feature>
<feature type="sequence variant" id="VAR_015123" description="In KEL23 antigen; dbSNP:rs61729038.">
    <original>Q</original>
    <variation>R</variation>
    <location>
        <position position="382"/>
    </location>
</feature>
<feature type="sequence variant" id="VAR_015124" description="In KEL26 antigen; dbSNP:rs61729041.">
    <original>R</original>
    <variation>Q</variation>
    <location>
        <position position="406"/>
    </location>
</feature>
<feature type="sequence variant" id="VAR_015125" description="In KEL19 antigen; dbSNP:rs61729035.">
    <original>R</original>
    <variation>Q</variation>
    <location>
        <position position="492"/>
    </location>
</feature>
<feature type="sequence variant" id="VAR_006736" description="In KEL10/Ul(a) antigen; dbSNP:rs61729032." evidence="11">
    <original>E</original>
    <variation>V</variation>
    <location>
        <position position="494"/>
    </location>
</feature>
<feature type="sequence variant" id="VAR_015126" description="In KEL12 antigen; dbSNP:rs61729033.">
    <original>H</original>
    <variation>R</variation>
    <location>
        <position position="548"/>
    </location>
</feature>
<feature type="sequence variant" id="VAR_006737" description="In KEL6/Js(a) antigen; dbSNP:rs8176038." evidence="9 14">
    <original>L</original>
    <variation>P</variation>
    <location>
        <position position="597"/>
    </location>
</feature>
<feature type="sequence variant" id="VAR_016266" description="In dbSNP:rs8176048." evidence="14">
    <original>S</original>
    <variation>A</variation>
    <location>
        <position position="726"/>
    </location>
</feature>
<feature type="mutagenesis site" description="Loss of Kell-XK complex." evidence="13">
    <original>C</original>
    <variation>S</variation>
    <location>
        <position position="72"/>
    </location>
</feature>
<feature type="mutagenesis site" description="No loss of Kell-XK complex." evidence="13">
    <original>C</original>
    <variation>S</variation>
    <location>
        <position position="319"/>
    </location>
</feature>
<feature type="mutagenesis site" description="Loss of catalytic activity." evidence="6">
    <original>E</original>
    <variation>G</variation>
    <location>
        <position position="582"/>
    </location>
</feature>
<evidence type="ECO:0000250" key="1"/>
<evidence type="ECO:0000255" key="2"/>
<evidence type="ECO:0000255" key="3">
    <source>
        <dbReference type="PROSITE-ProRule" id="PRU01233"/>
    </source>
</evidence>
<evidence type="ECO:0000255" key="4">
    <source>
        <dbReference type="PROSITE-ProRule" id="PRU10095"/>
    </source>
</evidence>
<evidence type="ECO:0000256" key="5">
    <source>
        <dbReference type="SAM" id="MobiDB-lite"/>
    </source>
</evidence>
<evidence type="ECO:0000269" key="6">
    <source>
    </source>
</evidence>
<evidence type="ECO:0000269" key="7">
    <source>
    </source>
</evidence>
<evidence type="ECO:0000269" key="8">
    <source>
    </source>
</evidence>
<evidence type="ECO:0000269" key="9">
    <source>
    </source>
</evidence>
<evidence type="ECO:0000269" key="10">
    <source>
    </source>
</evidence>
<evidence type="ECO:0000269" key="11">
    <source>
    </source>
</evidence>
<evidence type="ECO:0000269" key="12">
    <source>
    </source>
</evidence>
<evidence type="ECO:0000269" key="13">
    <source>
    </source>
</evidence>
<evidence type="ECO:0000269" key="14">
    <source ref="3"/>
</evidence>
<evidence type="ECO:0000305" key="15"/>
<evidence type="ECO:0007744" key="16">
    <source>
    </source>
</evidence>
<accession>P23276</accession>
<accession>B2RBV4</accession>
<accession>Q96RS8</accession>
<accession>Q99885</accession>
<reference key="1">
    <citation type="journal article" date="1991" name="Proc. Natl. Acad. Sci. U.S.A.">
        <title>Molecular cloning and primary structure of Kell blood group protein.</title>
        <authorList>
            <person name="Lee S."/>
            <person name="Zambas E.D."/>
            <person name="Marsh W.L."/>
            <person name="Redman C.M."/>
        </authorList>
    </citation>
    <scope>NUCLEOTIDE SEQUENCE [MRNA]</scope>
    <scope>PARTIAL PROTEIN SEQUENCE</scope>
</reference>
<reference key="2">
    <citation type="journal article" date="1995" name="Blood">
        <title>Organization of the gene encoding the human Kell blood group protein.</title>
        <authorList>
            <person name="Lee S."/>
            <person name="Zambas E."/>
            <person name="Green E.D."/>
            <person name="Redman C.M."/>
        </authorList>
    </citation>
    <scope>NUCLEOTIDE SEQUENCE [GENOMIC DNA]</scope>
</reference>
<reference key="3">
    <citation type="submission" date="2003-01" db="EMBL/GenBank/DDBJ databases">
        <authorList>
            <consortium name="SeattleSNPs variation discovery resource"/>
        </authorList>
    </citation>
    <scope>NUCLEOTIDE SEQUENCE [GENOMIC DNA]</scope>
    <scope>VARIANTS THR-163; MET-193; TRP-281; PRO-597 AND ALA-726</scope>
</reference>
<reference key="4">
    <citation type="journal article" date="2004" name="Nat. Genet.">
        <title>Complete sequencing and characterization of 21,243 full-length human cDNAs.</title>
        <authorList>
            <person name="Ota T."/>
            <person name="Suzuki Y."/>
            <person name="Nishikawa T."/>
            <person name="Otsuki T."/>
            <person name="Sugiyama T."/>
            <person name="Irie R."/>
            <person name="Wakamatsu A."/>
            <person name="Hayashi K."/>
            <person name="Sato H."/>
            <person name="Nagai K."/>
            <person name="Kimura K."/>
            <person name="Makita H."/>
            <person name="Sekine M."/>
            <person name="Obayashi M."/>
            <person name="Nishi T."/>
            <person name="Shibahara T."/>
            <person name="Tanaka T."/>
            <person name="Ishii S."/>
            <person name="Yamamoto J."/>
            <person name="Saito K."/>
            <person name="Kawai Y."/>
            <person name="Isono Y."/>
            <person name="Nakamura Y."/>
            <person name="Nagahari K."/>
            <person name="Murakami K."/>
            <person name="Yasuda T."/>
            <person name="Iwayanagi T."/>
            <person name="Wagatsuma M."/>
            <person name="Shiratori A."/>
            <person name="Sudo H."/>
            <person name="Hosoiri T."/>
            <person name="Kaku Y."/>
            <person name="Kodaira H."/>
            <person name="Kondo H."/>
            <person name="Sugawara M."/>
            <person name="Takahashi M."/>
            <person name="Kanda K."/>
            <person name="Yokoi T."/>
            <person name="Furuya T."/>
            <person name="Kikkawa E."/>
            <person name="Omura Y."/>
            <person name="Abe K."/>
            <person name="Kamihara K."/>
            <person name="Katsuta N."/>
            <person name="Sato K."/>
            <person name="Tanikawa M."/>
            <person name="Yamazaki M."/>
            <person name="Ninomiya K."/>
            <person name="Ishibashi T."/>
            <person name="Yamashita H."/>
            <person name="Murakawa K."/>
            <person name="Fujimori K."/>
            <person name="Tanai H."/>
            <person name="Kimata M."/>
            <person name="Watanabe M."/>
            <person name="Hiraoka S."/>
            <person name="Chiba Y."/>
            <person name="Ishida S."/>
            <person name="Ono Y."/>
            <person name="Takiguchi S."/>
            <person name="Watanabe S."/>
            <person name="Yosida M."/>
            <person name="Hotuta T."/>
            <person name="Kusano J."/>
            <person name="Kanehori K."/>
            <person name="Takahashi-Fujii A."/>
            <person name="Hara H."/>
            <person name="Tanase T.-O."/>
            <person name="Nomura Y."/>
            <person name="Togiya S."/>
            <person name="Komai F."/>
            <person name="Hara R."/>
            <person name="Takeuchi K."/>
            <person name="Arita M."/>
            <person name="Imose N."/>
            <person name="Musashino K."/>
            <person name="Yuuki H."/>
            <person name="Oshima A."/>
            <person name="Sasaki N."/>
            <person name="Aotsuka S."/>
            <person name="Yoshikawa Y."/>
            <person name="Matsunawa H."/>
            <person name="Ichihara T."/>
            <person name="Shiohata N."/>
            <person name="Sano S."/>
            <person name="Moriya S."/>
            <person name="Momiyama H."/>
            <person name="Satoh N."/>
            <person name="Takami S."/>
            <person name="Terashima Y."/>
            <person name="Suzuki O."/>
            <person name="Nakagawa S."/>
            <person name="Senoh A."/>
            <person name="Mizoguchi H."/>
            <person name="Goto Y."/>
            <person name="Shimizu F."/>
            <person name="Wakebe H."/>
            <person name="Hishigaki H."/>
            <person name="Watanabe T."/>
            <person name="Sugiyama A."/>
            <person name="Takemoto M."/>
            <person name="Kawakami B."/>
            <person name="Yamazaki M."/>
            <person name="Watanabe K."/>
            <person name="Kumagai A."/>
            <person name="Itakura S."/>
            <person name="Fukuzumi Y."/>
            <person name="Fujimori Y."/>
            <person name="Komiyama M."/>
            <person name="Tashiro H."/>
            <person name="Tanigami A."/>
            <person name="Fujiwara T."/>
            <person name="Ono T."/>
            <person name="Yamada K."/>
            <person name="Fujii Y."/>
            <person name="Ozaki K."/>
            <person name="Hirao M."/>
            <person name="Ohmori Y."/>
            <person name="Kawabata A."/>
            <person name="Hikiji T."/>
            <person name="Kobatake N."/>
            <person name="Inagaki H."/>
            <person name="Ikema Y."/>
            <person name="Okamoto S."/>
            <person name="Okitani R."/>
            <person name="Kawakami T."/>
            <person name="Noguchi S."/>
            <person name="Itoh T."/>
            <person name="Shigeta K."/>
            <person name="Senba T."/>
            <person name="Matsumura K."/>
            <person name="Nakajima Y."/>
            <person name="Mizuno T."/>
            <person name="Morinaga M."/>
            <person name="Sasaki M."/>
            <person name="Togashi T."/>
            <person name="Oyama M."/>
            <person name="Hata H."/>
            <person name="Watanabe M."/>
            <person name="Komatsu T."/>
            <person name="Mizushima-Sugano J."/>
            <person name="Satoh T."/>
            <person name="Shirai Y."/>
            <person name="Takahashi Y."/>
            <person name="Nakagawa K."/>
            <person name="Okumura K."/>
            <person name="Nagase T."/>
            <person name="Nomura N."/>
            <person name="Kikuchi H."/>
            <person name="Masuho Y."/>
            <person name="Yamashita R."/>
            <person name="Nakai K."/>
            <person name="Yada T."/>
            <person name="Nakamura Y."/>
            <person name="Ohara O."/>
            <person name="Isogai T."/>
            <person name="Sugano S."/>
        </authorList>
    </citation>
    <scope>NUCLEOTIDE SEQUENCE [LARGE SCALE MRNA]</scope>
    <source>
        <tissue>Testis</tissue>
    </source>
</reference>
<reference key="5">
    <citation type="submission" date="2005-09" db="EMBL/GenBank/DDBJ databases">
        <authorList>
            <person name="Mural R.J."/>
            <person name="Istrail S."/>
            <person name="Sutton G.G."/>
            <person name="Florea L."/>
            <person name="Halpern A.L."/>
            <person name="Mobarry C.M."/>
            <person name="Lippert R."/>
            <person name="Walenz B."/>
            <person name="Shatkay H."/>
            <person name="Dew I."/>
            <person name="Miller J.R."/>
            <person name="Flanigan M.J."/>
            <person name="Edwards N.J."/>
            <person name="Bolanos R."/>
            <person name="Fasulo D."/>
            <person name="Halldorsson B.V."/>
            <person name="Hannenhalli S."/>
            <person name="Turner R."/>
            <person name="Yooseph S."/>
            <person name="Lu F."/>
            <person name="Nusskern D.R."/>
            <person name="Shue B.C."/>
            <person name="Zheng X.H."/>
            <person name="Zhong F."/>
            <person name="Delcher A.L."/>
            <person name="Huson D.H."/>
            <person name="Kravitz S.A."/>
            <person name="Mouchard L."/>
            <person name="Reinert K."/>
            <person name="Remington K.A."/>
            <person name="Clark A.G."/>
            <person name="Waterman M.S."/>
            <person name="Eichler E.E."/>
            <person name="Adams M.D."/>
            <person name="Hunkapiller M.W."/>
            <person name="Myers E.W."/>
            <person name="Venter J.C."/>
        </authorList>
    </citation>
    <scope>NUCLEOTIDE SEQUENCE [LARGE SCALE GENOMIC DNA]</scope>
</reference>
<reference key="6">
    <citation type="journal article" date="2004" name="Genome Res.">
        <title>The status, quality, and expansion of the NIH full-length cDNA project: the Mammalian Gene Collection (MGC).</title>
        <authorList>
            <consortium name="The MGC Project Team"/>
        </authorList>
    </citation>
    <scope>NUCLEOTIDE SEQUENCE [LARGE SCALE MRNA]</scope>
    <source>
        <tissue>Brain</tissue>
        <tissue>Skin</tissue>
    </source>
</reference>
<reference key="7">
    <citation type="submission" date="2000-06" db="EMBL/GenBank/DDBJ databases">
        <title>PCR amplification and sequencing of the human KEL gene.</title>
        <authorList>
            <person name="Denomme G.A."/>
            <person name="Matheson K.A."/>
        </authorList>
    </citation>
    <scope>NUCLEOTIDE SEQUENCE [GENOMIC DNA] OF 225-308</scope>
</reference>
<reference key="8">
    <citation type="journal article" date="1995" name="Transfusion">
        <title>Molecular basis of the K:6,-7 [Js(a+b-)] phenotype in the Kell blood group system.</title>
        <authorList>
            <person name="Lee S."/>
            <person name="Wu X."/>
            <person name="Reid M.E."/>
            <person name="Redman C.M."/>
        </authorList>
    </citation>
    <scope>NUCLEOTIDE SEQUENCE [GENOMIC DNA] OF 569-647</scope>
    <scope>VARIANT BLOOD GROUP KEL6/KEL7 PRO-597</scope>
    <scope>POLYMORPHISM</scope>
</reference>
<reference key="9">
    <citation type="journal article" date="1998" name="J. Biol. Chem.">
        <title>Association of XK and Kell blood group proteins.</title>
        <authorList>
            <person name="Russo D."/>
            <person name="Redman C."/>
            <person name="Lee S."/>
        </authorList>
    </citation>
    <scope>INTERACTION WITH XK</scope>
    <scope>DISULFIDE BOND</scope>
    <scope>MUTAGENESIS OF CYS-72 AND CYS-319</scope>
</reference>
<reference key="10">
    <citation type="journal article" date="1999" name="Blood">
        <title>Proteolytic processing of big endothelin-3 by the kell blood group protein.</title>
        <authorList>
            <person name="Lee S."/>
            <person name="Lin M."/>
            <person name="Mele A."/>
            <person name="Cao Y."/>
            <person name="Farmar J."/>
            <person name="Russo D."/>
            <person name="Redman C."/>
        </authorList>
    </citation>
    <scope>FUNCTION</scope>
    <scope>MUTAGENESIS OF GLU-582</scope>
</reference>
<reference key="11">
    <citation type="journal article" date="2000" name="Blood">
        <title>Expression of Kell blood group protein in nonerythroid tissues.</title>
        <authorList>
            <person name="Russo D."/>
            <person name="Wu X."/>
            <person name="Redman C.M."/>
            <person name="Lee S."/>
        </authorList>
    </citation>
    <scope>TISSUE SPECIFICITY</scope>
    <scope>INTERACTION WITH XK</scope>
</reference>
<reference key="12">
    <citation type="journal article" date="2001" name="Biochem. J.">
        <title>Transcriptional regulation of the KEL gene and Kell protein expression in erythroid and non-erythroid cells.</title>
        <authorList>
            <person name="Camara-Clayette V."/>
            <person name="Rahuel C."/>
            <person name="Lopez C."/>
            <person name="Hattab C."/>
            <person name="Verkarre V."/>
            <person name="Bertrand O."/>
            <person name="Cartron J.P."/>
        </authorList>
    </citation>
    <scope>TISSUE SPECIFICITY</scope>
    <scope>GLYCOSYLATION</scope>
</reference>
<reference key="13">
    <citation type="journal article" date="2013" name="J. Proteome Res.">
        <title>Toward a comprehensive characterization of a human cancer cell phosphoproteome.</title>
        <authorList>
            <person name="Zhou H."/>
            <person name="Di Palma S."/>
            <person name="Preisinger C."/>
            <person name="Peng M."/>
            <person name="Polat A.N."/>
            <person name="Heck A.J."/>
            <person name="Mohammed S."/>
        </authorList>
    </citation>
    <scope>PHOSPHORYLATION [LARGE SCALE ANALYSIS] AT SER-7</scope>
    <scope>IDENTIFICATION BY MASS SPECTROMETRY [LARGE SCALE ANALYSIS]</scope>
    <source>
        <tissue>Erythroleukemia</tissue>
    </source>
</reference>
<reference key="14">
    <citation type="journal article" date="1995" name="Blood">
        <title>Molecular basis of the Kell (K1) phenotype.</title>
        <authorList>
            <person name="Lee S."/>
            <person name="Wu X."/>
            <person name="Reid M.E."/>
            <person name="Zelinski T."/>
            <person name="Redman C.M."/>
        </authorList>
    </citation>
    <scope>VARIANT BLOOD GROUP KEL1/KEL2 MET-193</scope>
    <scope>POLYMORPHISM</scope>
</reference>
<reference key="15">
    <citation type="journal article" date="1996" name="Transfusion">
        <title>Point mutations characterize KEL10, the KEL3, KEL4, and KEL21 alleles, and the KEL17 and KEL11 alleles.</title>
        <authorList>
            <person name="Lee S."/>
            <person name="Wu X."/>
            <person name="Son S."/>
            <person name="Naime D."/>
            <person name="Reid M.E."/>
            <person name="Okubo Y."/>
            <person name="Sistonen P."/>
            <person name="Redman C.M."/>
        </authorList>
    </citation>
    <scope>VARIANTS BLOOD GROUP KEL3/KEL4/KEL21; KEL11/17 AND KEL10</scope>
    <scope>POLYMORPHISM</scope>
</reference>
<reference key="16">
    <citation type="journal article" date="1997" name="Transfusion">
        <title>The KEL24 and KEL14 alleles of the Kell blood group system.</title>
        <authorList>
            <person name="Lee S."/>
            <person name="Naime D."/>
            <person name="Reid M."/>
            <person name="Redman C."/>
        </authorList>
    </citation>
    <scope>VARIANT BLOOD GROUP KEL14/KEL24 PRO-180</scope>
    <scope>POLYMORPHISM</scope>
</reference>
<name>KELL_HUMAN</name>
<comment type="function">
    <text evidence="6">Zinc endopeptidase with endothelin-3-converting enzyme activity. Cleaves EDN1, EDN2 and EDN3, with a marked preference for EDN3.</text>
</comment>
<comment type="cofactor">
    <cofactor evidence="1">
        <name>Zn(2+)</name>
        <dbReference type="ChEBI" id="CHEBI:29105"/>
    </cofactor>
    <text evidence="1">Binds 1 zinc ion per subunit.</text>
</comment>
<comment type="subunit">
    <text evidence="13">Heterodimer with XK; disulfide-linked.</text>
</comment>
<comment type="interaction">
    <interactant intactId="EBI-746662">
        <id>P23276</id>
    </interactant>
    <interactant intactId="EBI-10827839">
        <id>Q15848</id>
        <label>ADIPOQ</label>
    </interactant>
    <organismsDiffer>false</organismsDiffer>
    <experiments>3</experiments>
</comment>
<comment type="interaction">
    <interactant intactId="EBI-746662">
        <id>P23276</id>
    </interactant>
    <interactant intactId="EBI-8558308">
        <id>P01031</id>
        <label>C5</label>
    </interactant>
    <organismsDiffer>false</organismsDiffer>
    <experiments>3</experiments>
</comment>
<comment type="interaction">
    <interactant intactId="EBI-746662">
        <id>P23276</id>
    </interactant>
    <interactant intactId="EBI-12256978">
        <id>Q8N6F1-2</id>
        <label>CLDN19</label>
    </interactant>
    <organismsDiffer>false</organismsDiffer>
    <experiments>3</experiments>
</comment>
<comment type="interaction">
    <interactant intactId="EBI-746662">
        <id>P23276</id>
    </interactant>
    <interactant intactId="EBI-11339910">
        <id>Q8IYS1</id>
        <label>PM20D2</label>
    </interactant>
    <organismsDiffer>false</organismsDiffer>
    <experiments>3</experiments>
</comment>
<comment type="interaction">
    <interactant intactId="EBI-746662">
        <id>P23276</id>
    </interactant>
    <interactant intactId="EBI-476586">
        <id>P17612</id>
        <label>PRKACA</label>
    </interactant>
    <organismsDiffer>false</organismsDiffer>
    <experiments>3</experiments>
</comment>
<comment type="interaction">
    <interactant intactId="EBI-746662">
        <id>P23276</id>
    </interactant>
    <interactant intactId="EBI-350723">
        <id>P50454</id>
        <label>SERPINH1</label>
    </interactant>
    <organismsDiffer>false</organismsDiffer>
    <experiments>3</experiments>
</comment>
<comment type="interaction">
    <interactant intactId="EBI-746662">
        <id>P23276</id>
    </interactant>
    <interactant intactId="EBI-296151">
        <id>P37173</id>
        <label>TGFBR2</label>
    </interactant>
    <organismsDiffer>false</organismsDiffer>
    <experiments>3</experiments>
</comment>
<comment type="interaction">
    <interactant intactId="EBI-746662">
        <id>P23276</id>
    </interactant>
    <interactant intactId="EBI-10243654">
        <id>Q5BVD1</id>
        <label>TTMP</label>
    </interactant>
    <organismsDiffer>false</organismsDiffer>
    <experiments>3</experiments>
</comment>
<comment type="subcellular location">
    <subcellularLocation>
        <location>Cell membrane</location>
        <topology>Single-pass type II membrane protein</topology>
    </subcellularLocation>
    <text>Spans the erythrocyte membrane, and is attached to the underlying cytoskeleton.</text>
</comment>
<comment type="tissue specificity">
    <text evidence="7 8">Expressed at high levels in erythrocytes and testis (in Sertoli cells), and, at lower levels, in skeletal muscle, tonsils (in follicular dendritic cells), lymph node, spleen and appendix (at protein level). Also expressed in many adult and fetal nonerythroid tissues, including brain, spleen, lymph nodes and bone marrow.</text>
</comment>
<comment type="PTM">
    <text evidence="8">N-glycosylated.</text>
</comment>
<comment type="polymorphism">
    <text evidence="9 10 11 12">KEL is responsible for the Kell blood group system. The molecular basis of the K=KEL1/k=KEL2 blood group antigens is a single variation in position 193; Thr-193 corresponds to KEL2 and Met-193 to KEL1 (PubMed:7849312). The molecular basis of the Kpa=KEL3/Kpb=KEL4/Kpc=KEL21 blood group antigens is a single variation in position 281; Arg-281 corresponds to KEL4, Trp-281 to KEL3 and Gln-281 to KEL21 (PubMed:8669078). The molecular basis of the Jsa=KEL6/Jsb=KEL7 blood group antigens is a single variation in position 597; Leu-597 corresponds to KEL7 and Pro-597 to KEL6 (PubMed:7570911). The molecular basis of the KEL11/KEL17 blood group antigens is a single variation in position 302; Val-302 corresponds to KEL11 and Ala-302 to KEL17 (PubMed:8669078). The molecular basis of the KEL14/KEL24 blood group antigens is a single variation in position 180; Arg-180 corresponds to KEL14 and Pro-180 to KEL24 (PubMed:9354821).</text>
</comment>
<comment type="similarity">
    <text evidence="3 15">Belongs to the peptidase M13 family.</text>
</comment>
<organism>
    <name type="scientific">Homo sapiens</name>
    <name type="common">Human</name>
    <dbReference type="NCBI Taxonomy" id="9606"/>
    <lineage>
        <taxon>Eukaryota</taxon>
        <taxon>Metazoa</taxon>
        <taxon>Chordata</taxon>
        <taxon>Craniata</taxon>
        <taxon>Vertebrata</taxon>
        <taxon>Euteleostomi</taxon>
        <taxon>Mammalia</taxon>
        <taxon>Eutheria</taxon>
        <taxon>Euarchontoglires</taxon>
        <taxon>Primates</taxon>
        <taxon>Haplorrhini</taxon>
        <taxon>Catarrhini</taxon>
        <taxon>Hominidae</taxon>
        <taxon>Homo</taxon>
    </lineage>
</organism>